<comment type="function">
    <text evidence="1">Component of the dark-operative protochlorophyllide reductase (DPOR) that uses Mg-ATP and reduced ferredoxin to reduce ring D of protochlorophyllide (Pchlide) to form chlorophyllide a (Chlide). This reaction is light-independent. The NB-protein (BchN-BchB) is the catalytic component of the complex.</text>
</comment>
<comment type="catalytic activity">
    <reaction evidence="1">
        <text>chlorophyllide a + oxidized 2[4Fe-4S]-[ferredoxin] + 2 ADP + 2 phosphate = protochlorophyllide a + reduced 2[4Fe-4S]-[ferredoxin] + 2 ATP + 2 H2O</text>
        <dbReference type="Rhea" id="RHEA:28202"/>
        <dbReference type="Rhea" id="RHEA-COMP:10002"/>
        <dbReference type="Rhea" id="RHEA-COMP:10004"/>
        <dbReference type="ChEBI" id="CHEBI:15377"/>
        <dbReference type="ChEBI" id="CHEBI:30616"/>
        <dbReference type="ChEBI" id="CHEBI:33722"/>
        <dbReference type="ChEBI" id="CHEBI:33723"/>
        <dbReference type="ChEBI" id="CHEBI:43474"/>
        <dbReference type="ChEBI" id="CHEBI:83348"/>
        <dbReference type="ChEBI" id="CHEBI:83350"/>
        <dbReference type="ChEBI" id="CHEBI:456216"/>
        <dbReference type="EC" id="1.3.7.7"/>
    </reaction>
</comment>
<comment type="cofactor">
    <cofactor evidence="1">
        <name>[4Fe-4S] cluster</name>
        <dbReference type="ChEBI" id="CHEBI:49883"/>
    </cofactor>
    <text evidence="1">Binds 1 [4Fe-4S] cluster per heterodimer. The cluster is bound at the heterodimer interface by residues from both subunits.</text>
</comment>
<comment type="pathway">
    <text evidence="1">Porphyrin-containing compound metabolism; bacteriochlorophyll biosynthesis (light-independent).</text>
</comment>
<comment type="subunit">
    <text evidence="1">Protochlorophyllide reductase is composed of three subunits; BchL, BchN and BchB. Forms a heterotetramer of two BchB and two BchN subunits.</text>
</comment>
<comment type="similarity">
    <text evidence="1">Belongs to the ChlB/BchB/BchZ family.</text>
</comment>
<proteinExistence type="inferred from homology"/>
<protein>
    <recommendedName>
        <fullName evidence="1">Light-independent protochlorophyllide reductase subunit B</fullName>
        <shortName evidence="1">DPOR subunit B</shortName>
        <shortName evidence="1">LI-POR subunit B</shortName>
        <ecNumber evidence="1">1.3.7.7</ecNumber>
    </recommendedName>
</protein>
<dbReference type="EC" id="1.3.7.7" evidence="1"/>
<dbReference type="EMBL" id="AJ010302">
    <property type="protein sequence ID" value="CAB38724.1"/>
    <property type="molecule type" value="Genomic_DNA"/>
</dbReference>
<dbReference type="EMBL" id="AF195122">
    <property type="protein sequence ID" value="AAF24274.1"/>
    <property type="molecule type" value="Genomic_DNA"/>
</dbReference>
<dbReference type="EMBL" id="CP000143">
    <property type="protein sequence ID" value="ABA79459.1"/>
    <property type="molecule type" value="Genomic_DNA"/>
</dbReference>
<dbReference type="PIR" id="T50730">
    <property type="entry name" value="T50730"/>
</dbReference>
<dbReference type="RefSeq" id="WP_011338124.1">
    <property type="nucleotide sequence ID" value="NC_007493.2"/>
</dbReference>
<dbReference type="RefSeq" id="YP_353360.1">
    <property type="nucleotide sequence ID" value="NC_007493.2"/>
</dbReference>
<dbReference type="SMR" id="Q9Z5D9"/>
<dbReference type="STRING" id="272943.RSP_0286"/>
<dbReference type="EnsemblBacteria" id="ABA79459">
    <property type="protein sequence ID" value="ABA79459"/>
    <property type="gene ID" value="RSP_0286"/>
</dbReference>
<dbReference type="GeneID" id="3719198"/>
<dbReference type="KEGG" id="rsp:RSP_0286"/>
<dbReference type="PATRIC" id="fig|272943.9.peg.2230"/>
<dbReference type="eggNOG" id="COG2710">
    <property type="taxonomic scope" value="Bacteria"/>
</dbReference>
<dbReference type="OrthoDB" id="5717231at2"/>
<dbReference type="PhylomeDB" id="Q9Z5D9"/>
<dbReference type="UniPathway" id="UPA00671"/>
<dbReference type="Proteomes" id="UP000002703">
    <property type="component" value="Chromosome 1"/>
</dbReference>
<dbReference type="GO" id="GO:0051539">
    <property type="term" value="F:4 iron, 4 sulfur cluster binding"/>
    <property type="evidence" value="ECO:0007669"/>
    <property type="project" value="UniProtKB-UniRule"/>
</dbReference>
<dbReference type="GO" id="GO:0005524">
    <property type="term" value="F:ATP binding"/>
    <property type="evidence" value="ECO:0007669"/>
    <property type="project" value="UniProtKB-UniRule"/>
</dbReference>
<dbReference type="GO" id="GO:0046872">
    <property type="term" value="F:metal ion binding"/>
    <property type="evidence" value="ECO:0007669"/>
    <property type="project" value="UniProtKB-KW"/>
</dbReference>
<dbReference type="GO" id="GO:0016730">
    <property type="term" value="F:oxidoreductase activity, acting on iron-sulfur proteins as donors"/>
    <property type="evidence" value="ECO:0007669"/>
    <property type="project" value="InterPro"/>
</dbReference>
<dbReference type="GO" id="GO:0016636">
    <property type="term" value="F:oxidoreductase activity, acting on the CH-CH group of donors, iron-sulfur protein as acceptor"/>
    <property type="evidence" value="ECO:0007669"/>
    <property type="project" value="UniProtKB-UniRule"/>
</dbReference>
<dbReference type="GO" id="GO:0036070">
    <property type="term" value="P:light-independent bacteriochlorophyll biosynthetic process"/>
    <property type="evidence" value="ECO:0007669"/>
    <property type="project" value="UniProtKB-UniRule"/>
</dbReference>
<dbReference type="GO" id="GO:0019685">
    <property type="term" value="P:photosynthesis, dark reaction"/>
    <property type="evidence" value="ECO:0007669"/>
    <property type="project" value="InterPro"/>
</dbReference>
<dbReference type="Gene3D" id="1.20.89.20">
    <property type="match status" value="1"/>
</dbReference>
<dbReference type="Gene3D" id="3.40.50.1980">
    <property type="entry name" value="Nitrogenase molybdenum iron protein domain"/>
    <property type="match status" value="3"/>
</dbReference>
<dbReference type="Gene3D" id="1.10.8.550">
    <property type="entry name" value="Proto-chlorophyllide reductase 57 kD subunit B"/>
    <property type="match status" value="1"/>
</dbReference>
<dbReference type="HAMAP" id="MF_00353">
    <property type="entry name" value="ChlB_BchB"/>
    <property type="match status" value="1"/>
</dbReference>
<dbReference type="InterPro" id="IPR050152">
    <property type="entry name" value="ChlB/BchB/BchZ"/>
</dbReference>
<dbReference type="InterPro" id="IPR013580">
    <property type="entry name" value="LI-POR_suB-like_C"/>
</dbReference>
<dbReference type="InterPro" id="IPR000510">
    <property type="entry name" value="Nase/OxRdtase_comp1"/>
</dbReference>
<dbReference type="InterPro" id="IPR042298">
    <property type="entry name" value="P-CP_red_C"/>
</dbReference>
<dbReference type="InterPro" id="IPR005969">
    <property type="entry name" value="Protochl_reductB"/>
</dbReference>
<dbReference type="InterPro" id="IPR016209">
    <property type="entry name" value="Protochlorophyllide_Rdtase"/>
</dbReference>
<dbReference type="NCBIfam" id="TIGR01278">
    <property type="entry name" value="DPOR_BchB"/>
    <property type="match status" value="1"/>
</dbReference>
<dbReference type="PANTHER" id="PTHR33712">
    <property type="entry name" value="LIGHT-INDEPENDENT PROTOCHLOROPHYLLIDE REDUCTASE SUBUNIT B"/>
    <property type="match status" value="1"/>
</dbReference>
<dbReference type="PANTHER" id="PTHR33712:SF7">
    <property type="entry name" value="LIGHT-INDEPENDENT PROTOCHLOROPHYLLIDE REDUCTASE SUBUNIT B"/>
    <property type="match status" value="1"/>
</dbReference>
<dbReference type="Pfam" id="PF00148">
    <property type="entry name" value="Oxidored_nitro"/>
    <property type="match status" value="1"/>
</dbReference>
<dbReference type="Pfam" id="PF08369">
    <property type="entry name" value="PCP_red"/>
    <property type="match status" value="1"/>
</dbReference>
<dbReference type="PIRSF" id="PIRSF000163">
    <property type="entry name" value="PCP_ChlB"/>
    <property type="match status" value="1"/>
</dbReference>
<dbReference type="SUPFAM" id="SSF53807">
    <property type="entry name" value="Helical backbone' metal receptor"/>
    <property type="match status" value="1"/>
</dbReference>
<name>BCHB_CERS4</name>
<feature type="chain" id="PRO_0000219802" description="Light-independent protochlorophyllide reductase subunit B">
    <location>
        <begin position="1"/>
        <end position="534"/>
    </location>
</feature>
<feature type="region of interest" description="Disordered" evidence="2">
    <location>
        <begin position="426"/>
        <end position="446"/>
    </location>
</feature>
<feature type="active site" description="Proton donor" evidence="1">
    <location>
        <position position="274"/>
    </location>
</feature>
<feature type="binding site" evidence="1">
    <location>
        <position position="36"/>
    </location>
    <ligand>
        <name>[4Fe-4S] cluster</name>
        <dbReference type="ChEBI" id="CHEBI:49883"/>
        <note>ligand shared with heterodimeric partner</note>
    </ligand>
</feature>
<feature type="binding site" evidence="1">
    <location>
        <begin position="409"/>
        <end position="410"/>
    </location>
    <ligand>
        <name>substrate</name>
    </ligand>
</feature>
<sequence length="534" mass="58233">MKLTLWTYEGPPHVGAMRVATGMTGMHYVLHAPQGDTYADLLFTMIERRGKRPPVSYTTFQARDLGSDTAELFQSACRDAYERFQPQAIMVGSSCTAELIQDDTGGLADALSLPVPVVHLELPSYQRKENFGADESFLQICRKLARPMERTEKVSCNLLGPTALGFRHRDDILEVTRLLEGMGIAVNAVAPMGASPADIARLGAAHFNVLLYPETGESAARWAEKTLKQPYTKTVPIGVGATRDFVAEVAALAGVAPVADDSRLRQPWWSASVDSTYLTGKRVFLFGDATHVIAAARVARDEMGFEVVGMGCYNREFARPMRAAAKGYGLEALVTDDYLEVEEAIQALAPELILGTQMERHIAKRLGIPCAVISAPVHVQDFPARYSPQMGFEGANVLFDTWIHPLTMGLEEHLLTMFREDFEFHDEAGPSHHGGKAVPASAPRADEAAEALPLTGAETAEGGSIPPEAVPPAEAAAVPAGEIVWLTDAERELKKIPFFVRGKARRNTEKFAAEKGLTRISLETLYEAKAHYAR</sequence>
<organism>
    <name type="scientific">Cereibacter sphaeroides (strain ATCC 17023 / DSM 158 / JCM 6121 / CCUG 31486 / LMG 2827 / NBRC 12203 / NCIMB 8253 / ATH 2.4.1.)</name>
    <name type="common">Rhodobacter sphaeroides</name>
    <dbReference type="NCBI Taxonomy" id="272943"/>
    <lineage>
        <taxon>Bacteria</taxon>
        <taxon>Pseudomonadati</taxon>
        <taxon>Pseudomonadota</taxon>
        <taxon>Alphaproteobacteria</taxon>
        <taxon>Rhodobacterales</taxon>
        <taxon>Paracoccaceae</taxon>
        <taxon>Cereibacter</taxon>
    </lineage>
</organism>
<gene>
    <name evidence="1" type="primary">bchB</name>
    <name type="ordered locus">RHOS4_18910</name>
    <name type="ORF">RSP_0286</name>
</gene>
<reference key="1">
    <citation type="journal article" date="1999" name="Photosyn. Res.">
        <title>The photosynthesis gene cluster of Rhodobacter sphaeroides.</title>
        <authorList>
            <person name="Naylor G.W."/>
            <person name="Addlesee H.A."/>
            <person name="Gibson L.C.D."/>
            <person name="Hunter C.N."/>
        </authorList>
    </citation>
    <scope>NUCLEOTIDE SEQUENCE [GENOMIC DNA]</scope>
</reference>
<reference key="2">
    <citation type="journal article" date="2000" name="Nucleic Acids Res.">
        <title>DNA sequence analysis of the photosynthesis region of Rhodobacter sphaeroides 2.4.1.</title>
        <authorList>
            <person name="Choudhary M."/>
            <person name="Kaplan S."/>
        </authorList>
    </citation>
    <scope>NUCLEOTIDE SEQUENCE [GENOMIC DNA]</scope>
</reference>
<reference key="3">
    <citation type="submission" date="2005-09" db="EMBL/GenBank/DDBJ databases">
        <title>Complete sequence of chromosome 1 of Rhodobacter sphaeroides 2.4.1.</title>
        <authorList>
            <person name="Copeland A."/>
            <person name="Lucas S."/>
            <person name="Lapidus A."/>
            <person name="Barry K."/>
            <person name="Detter J.C."/>
            <person name="Glavina T."/>
            <person name="Hammon N."/>
            <person name="Israni S."/>
            <person name="Pitluck S."/>
            <person name="Richardson P."/>
            <person name="Mackenzie C."/>
            <person name="Choudhary M."/>
            <person name="Larimer F."/>
            <person name="Hauser L.J."/>
            <person name="Land M."/>
            <person name="Donohue T.J."/>
            <person name="Kaplan S."/>
        </authorList>
    </citation>
    <scope>NUCLEOTIDE SEQUENCE [LARGE SCALE GENOMIC DNA]</scope>
    <source>
        <strain>ATCC 17023 / DSM 158 / JCM 6121 / CCUG 31486 / LMG 2827 / NBRC 12203 / NCIMB 8253 / ATH 2.4.1.</strain>
    </source>
</reference>
<keyword id="KW-0004">4Fe-4S</keyword>
<keyword id="KW-0067">ATP-binding</keyword>
<keyword id="KW-0077">Bacteriochlorophyll biosynthesis</keyword>
<keyword id="KW-0149">Chlorophyll biosynthesis</keyword>
<keyword id="KW-0408">Iron</keyword>
<keyword id="KW-0411">Iron-sulfur</keyword>
<keyword id="KW-0479">Metal-binding</keyword>
<keyword id="KW-0547">Nucleotide-binding</keyword>
<keyword id="KW-0560">Oxidoreductase</keyword>
<keyword id="KW-0602">Photosynthesis</keyword>
<keyword id="KW-1185">Reference proteome</keyword>
<accession>Q9Z5D9</accession>
<accession>Q3J175</accession>
<evidence type="ECO:0000255" key="1">
    <source>
        <dbReference type="HAMAP-Rule" id="MF_00353"/>
    </source>
</evidence>
<evidence type="ECO:0000256" key="2">
    <source>
        <dbReference type="SAM" id="MobiDB-lite"/>
    </source>
</evidence>